<evidence type="ECO:0000255" key="1">
    <source>
        <dbReference type="PROSITE-ProRule" id="PRU00541"/>
    </source>
</evidence>
<evidence type="ECO:0000255" key="2">
    <source>
        <dbReference type="PROSITE-ProRule" id="PRU00542"/>
    </source>
</evidence>
<evidence type="ECO:0000256" key="3">
    <source>
        <dbReference type="SAM" id="MobiDB-lite"/>
    </source>
</evidence>
<evidence type="ECO:0000269" key="4">
    <source>
    </source>
</evidence>
<evidence type="ECO:0000305" key="5"/>
<evidence type="ECO:0000305" key="6">
    <source>
    </source>
</evidence>
<protein>
    <recommendedName>
        <fullName>DEAD-box ATP-dependent RNA helicase 9, mitochondrial</fullName>
        <ecNumber>3.6.4.13</ecNumber>
    </recommendedName>
</protein>
<reference key="1">
    <citation type="journal article" date="2000" name="DNA Res.">
        <title>Structural analysis of Arabidopsis thaliana chromosome 3. I. Sequence features of the regions of 4,504,864 bp covered by sixty P1 and TAC clones.</title>
        <authorList>
            <person name="Sato S."/>
            <person name="Nakamura Y."/>
            <person name="Kaneko T."/>
            <person name="Katoh T."/>
            <person name="Asamizu E."/>
            <person name="Tabata S."/>
        </authorList>
    </citation>
    <scope>NUCLEOTIDE SEQUENCE [LARGE SCALE GENOMIC DNA]</scope>
    <source>
        <strain>cv. Columbia</strain>
    </source>
</reference>
<reference key="2">
    <citation type="journal article" date="2017" name="Plant J.">
        <title>Araport11: a complete reannotation of the Arabidopsis thaliana reference genome.</title>
        <authorList>
            <person name="Cheng C.Y."/>
            <person name="Krishnakumar V."/>
            <person name="Chan A.P."/>
            <person name="Thibaud-Nissen F."/>
            <person name="Schobel S."/>
            <person name="Town C.D."/>
        </authorList>
    </citation>
    <scope>GENOME REANNOTATION</scope>
    <source>
        <strain>cv. Columbia</strain>
    </source>
</reference>
<reference key="3">
    <citation type="journal article" date="2003" name="Science">
        <title>Empirical analysis of transcriptional activity in the Arabidopsis genome.</title>
        <authorList>
            <person name="Yamada K."/>
            <person name="Lim J."/>
            <person name="Dale J.M."/>
            <person name="Chen H."/>
            <person name="Shinn P."/>
            <person name="Palm C.J."/>
            <person name="Southwick A.M."/>
            <person name="Wu H.C."/>
            <person name="Kim C.J."/>
            <person name="Nguyen M."/>
            <person name="Pham P.K."/>
            <person name="Cheuk R.F."/>
            <person name="Karlin-Newmann G."/>
            <person name="Liu S.X."/>
            <person name="Lam B."/>
            <person name="Sakano H."/>
            <person name="Wu T."/>
            <person name="Yu G."/>
            <person name="Miranda M."/>
            <person name="Quach H.L."/>
            <person name="Tripp M."/>
            <person name="Chang C.H."/>
            <person name="Lee J.M."/>
            <person name="Toriumi M.J."/>
            <person name="Chan M.M."/>
            <person name="Tang C.C."/>
            <person name="Onodera C.S."/>
            <person name="Deng J.M."/>
            <person name="Akiyama K."/>
            <person name="Ansari Y."/>
            <person name="Arakawa T."/>
            <person name="Banh J."/>
            <person name="Banno F."/>
            <person name="Bowser L."/>
            <person name="Brooks S.Y."/>
            <person name="Carninci P."/>
            <person name="Chao Q."/>
            <person name="Choy N."/>
            <person name="Enju A."/>
            <person name="Goldsmith A.D."/>
            <person name="Gurjal M."/>
            <person name="Hansen N.F."/>
            <person name="Hayashizaki Y."/>
            <person name="Johnson-Hopson C."/>
            <person name="Hsuan V.W."/>
            <person name="Iida K."/>
            <person name="Karnes M."/>
            <person name="Khan S."/>
            <person name="Koesema E."/>
            <person name="Ishida J."/>
            <person name="Jiang P.X."/>
            <person name="Jones T."/>
            <person name="Kawai J."/>
            <person name="Kamiya A."/>
            <person name="Meyers C."/>
            <person name="Nakajima M."/>
            <person name="Narusaka M."/>
            <person name="Seki M."/>
            <person name="Sakurai T."/>
            <person name="Satou M."/>
            <person name="Tamse R."/>
            <person name="Vaysberg M."/>
            <person name="Wallender E.K."/>
            <person name="Wong C."/>
            <person name="Yamamura Y."/>
            <person name="Yuan S."/>
            <person name="Shinozaki K."/>
            <person name="Davis R.W."/>
            <person name="Theologis A."/>
            <person name="Ecker J.R."/>
        </authorList>
    </citation>
    <scope>NUCLEOTIDE SEQUENCE [LARGE SCALE MRNA]</scope>
    <source>
        <strain>cv. Columbia</strain>
    </source>
</reference>
<reference key="4">
    <citation type="journal article" date="1999" name="Nucleic Acids Res.">
        <title>The DEAD box RNA helicase family in Arabidopsis thaliana.</title>
        <authorList>
            <person name="Aubourg S."/>
            <person name="Kreis M."/>
            <person name="Lecharny A."/>
        </authorList>
    </citation>
    <scope>NUCLEOTIDE SEQUENCE [MRNA] OF 248-610</scope>
    <source>
        <strain>cv. Columbia</strain>
    </source>
</reference>
<reference key="5">
    <citation type="journal article" date="2004" name="Plant Biotechnol. J.">
        <title>DEAD-box RNA helicases in Arabidopsis thaliana: establishing a link between quantitative expression, gene structure and evolution of a family of genes.</title>
        <authorList>
            <person name="Mingam A."/>
            <person name="Toffano-Nioche C."/>
            <person name="Brunaud V."/>
            <person name="Boudet N."/>
            <person name="Kreis M."/>
            <person name="Lecharny A."/>
        </authorList>
    </citation>
    <scope>GENE FAMILY</scope>
    <scope>NOMENCLATURE</scope>
</reference>
<reference key="6">
    <citation type="journal article" date="2007" name="Mol. Cell. Proteomics">
        <title>Multidimensional protein identification technology (MudPIT) analysis of ubiquitinated proteins in plants.</title>
        <authorList>
            <person name="Maor R."/>
            <person name="Jones A."/>
            <person name="Nuehse T.S."/>
            <person name="Studholme D.J."/>
            <person name="Peck S.C."/>
            <person name="Shirasu K."/>
        </authorList>
    </citation>
    <scope>IDENTIFICATION BY MASS SPECTROMETRY [LARGE SCALE ANALYSIS]</scope>
    <source>
        <strain>cv. Landsberg erecta</strain>
    </source>
</reference>
<reference key="7">
    <citation type="journal article" date="2013" name="PLoS ONE">
        <title>Genome-wide comparative in silico analysis of the RNA helicase gene family in Zea mays and Glycine max: a comparison with Arabidopsis and Oryza sativa.</title>
        <authorList>
            <person name="Xu R."/>
            <person name="Zhang S."/>
            <person name="Huang J."/>
            <person name="Zheng C."/>
        </authorList>
    </citation>
    <scope>GENE FAMILY</scope>
</reference>
<reference key="8">
    <citation type="journal article" date="2015" name="J. Exp. Bot.">
        <title>Identification of cleavage sites and substrate proteins for two mitochondrial intermediate peptidases in Arabidopsis thaliana.</title>
        <authorList>
            <person name="Carrie C."/>
            <person name="Venne A.S."/>
            <person name="Zahedi R.P."/>
            <person name="Soll J."/>
        </authorList>
    </citation>
    <scope>IDENTIFICATION BY MASS SPECTROMETRY</scope>
    <scope>CLEAVAGE OF TRANSIT PEPTIDE AFTER ASP-66</scope>
</reference>
<sequence>MISTVLRRSILGTSRRTLAASVTSINAALFHNLAPAAATVSDLANGATNVKSLPSNSSPFGVKVRDFHVKSVPSEFRSSIVSSAGFAAQEYAPSYENDGGIGDSESVGSSGGGDGLAIADLGISPEIVKALKGRGIEKLFPIQKAVLEPAMEGRDMIGRARTGTGKTLAFGIPIIDKIIKFNAKHGRGKNPQCLVLAPTRELARQVEKEFRESAPSLDTICLYGGTPIGQQMRELNYGIDVAVGTPGRIIDLMKRGALNLSEVQFVVLDEADQMLQVGFAEDVEIILQKLPAKRQSMMFSATMPSWIRSLTKKYLNNPLTIDLVGDSDQKLADGITMYSIAADSYGRASIIGPLVKEHGKGGKCIVFTQTKRDADRLAFGLAKSYKCEALHGDISQAQRERTLAGFRDGNFSILVATDVAARGLDVPNVDLVIHYELPNNTETFVHRTGRTGRAGKKGSAILIHGQDQTRAVKMIEKEVGSRFNELPSIAVERGSASMFEGVGARSGGSFGGGRSGGGGYGSYGSSSGRSGGGSYGGYGGSSGRSGGGGGSYGGSGGSSSRYSGGSDRSSGFGSFGSGGSSGGFGSDRSSQSSGRSSFGGFGSNDGKRSY</sequence>
<accession>Q9LUW6</accession>
<accession>Q9ZS11</accession>
<name>RH9_ARATH</name>
<organism>
    <name type="scientific">Arabidopsis thaliana</name>
    <name type="common">Mouse-ear cress</name>
    <dbReference type="NCBI Taxonomy" id="3702"/>
    <lineage>
        <taxon>Eukaryota</taxon>
        <taxon>Viridiplantae</taxon>
        <taxon>Streptophyta</taxon>
        <taxon>Embryophyta</taxon>
        <taxon>Tracheophyta</taxon>
        <taxon>Spermatophyta</taxon>
        <taxon>Magnoliopsida</taxon>
        <taxon>eudicotyledons</taxon>
        <taxon>Gunneridae</taxon>
        <taxon>Pentapetalae</taxon>
        <taxon>rosids</taxon>
        <taxon>malvids</taxon>
        <taxon>Brassicales</taxon>
        <taxon>Brassicaceae</taxon>
        <taxon>Camelineae</taxon>
        <taxon>Arabidopsis</taxon>
    </lineage>
</organism>
<feature type="transit peptide" description="Mitochondrion" evidence="4">
    <location>
        <begin position="1"/>
        <end position="66"/>
    </location>
</feature>
<feature type="chain" id="PRO_0000239151" description="DEAD-box ATP-dependent RNA helicase 9, mitochondrial">
    <location>
        <begin position="67"/>
        <end position="610"/>
    </location>
</feature>
<feature type="domain" description="Helicase ATP-binding" evidence="1">
    <location>
        <begin position="147"/>
        <end position="321"/>
    </location>
</feature>
<feature type="domain" description="Helicase C-terminal" evidence="2">
    <location>
        <begin position="350"/>
        <end position="494"/>
    </location>
</feature>
<feature type="region of interest" description="Disordered" evidence="3">
    <location>
        <begin position="542"/>
        <end position="610"/>
    </location>
</feature>
<feature type="short sequence motif" description="Q motif">
    <location>
        <begin position="116"/>
        <end position="144"/>
    </location>
</feature>
<feature type="short sequence motif" description="DEAD box">
    <location>
        <begin position="269"/>
        <end position="272"/>
    </location>
</feature>
<feature type="compositionally biased region" description="Gly residues" evidence="3">
    <location>
        <begin position="542"/>
        <end position="557"/>
    </location>
</feature>
<feature type="compositionally biased region" description="Low complexity" evidence="3">
    <location>
        <begin position="558"/>
        <end position="572"/>
    </location>
</feature>
<feature type="compositionally biased region" description="Gly residues" evidence="3">
    <location>
        <begin position="573"/>
        <end position="585"/>
    </location>
</feature>
<feature type="compositionally biased region" description="Low complexity" evidence="3">
    <location>
        <begin position="586"/>
        <end position="596"/>
    </location>
</feature>
<feature type="binding site" evidence="1">
    <location>
        <begin position="160"/>
        <end position="167"/>
    </location>
    <ligand>
        <name>ATP</name>
        <dbReference type="ChEBI" id="CHEBI:30616"/>
    </ligand>
</feature>
<proteinExistence type="evidence at protein level"/>
<keyword id="KW-0067">ATP-binding</keyword>
<keyword id="KW-0347">Helicase</keyword>
<keyword id="KW-0378">Hydrolase</keyword>
<keyword id="KW-0496">Mitochondrion</keyword>
<keyword id="KW-0547">Nucleotide-binding</keyword>
<keyword id="KW-1185">Reference proteome</keyword>
<keyword id="KW-0694">RNA-binding</keyword>
<keyword id="KW-0809">Transit peptide</keyword>
<dbReference type="EC" id="3.6.4.13"/>
<dbReference type="EMBL" id="AB022215">
    <property type="protein sequence ID" value="BAB01768.1"/>
    <property type="molecule type" value="Genomic_DNA"/>
</dbReference>
<dbReference type="EMBL" id="CP002686">
    <property type="protein sequence ID" value="AEE76620.1"/>
    <property type="molecule type" value="Genomic_DNA"/>
</dbReference>
<dbReference type="EMBL" id="AY091091">
    <property type="protein sequence ID" value="AAM14042.1"/>
    <property type="molecule type" value="mRNA"/>
</dbReference>
<dbReference type="EMBL" id="AJ010461">
    <property type="protein sequence ID" value="CAA09200.1"/>
    <property type="molecule type" value="mRNA"/>
</dbReference>
<dbReference type="PIR" id="T51341">
    <property type="entry name" value="T51341"/>
</dbReference>
<dbReference type="SMR" id="Q9LUW6"/>
<dbReference type="BioGRID" id="7132">
    <property type="interactions" value="10"/>
</dbReference>
<dbReference type="FunCoup" id="Q9LUW6">
    <property type="interactions" value="381"/>
</dbReference>
<dbReference type="IntAct" id="Q9LUW6">
    <property type="interactions" value="9"/>
</dbReference>
<dbReference type="STRING" id="3702.Q9LUW6"/>
<dbReference type="iPTMnet" id="Q9LUW6"/>
<dbReference type="PaxDb" id="3702-AT3G22310.1"/>
<dbReference type="ProteomicsDB" id="236260"/>
<dbReference type="EnsemblPlants" id="AT3G22310.1">
    <property type="protein sequence ID" value="AT3G22310.1"/>
    <property type="gene ID" value="AT3G22310"/>
</dbReference>
<dbReference type="Gramene" id="AT3G22310.1">
    <property type="protein sequence ID" value="AT3G22310.1"/>
    <property type="gene ID" value="AT3G22310"/>
</dbReference>
<dbReference type="KEGG" id="ath:AT3G22310"/>
<dbReference type="Araport" id="AT3G22310"/>
<dbReference type="TAIR" id="AT3G22310">
    <property type="gene designation" value="PMH1"/>
</dbReference>
<dbReference type="eggNOG" id="KOG0331">
    <property type="taxonomic scope" value="Eukaryota"/>
</dbReference>
<dbReference type="HOGENOM" id="CLU_003041_29_1_1"/>
<dbReference type="InParanoid" id="Q9LUW6"/>
<dbReference type="PhylomeDB" id="Q9LUW6"/>
<dbReference type="PRO" id="PR:Q9LUW6"/>
<dbReference type="Proteomes" id="UP000006548">
    <property type="component" value="Chromosome 3"/>
</dbReference>
<dbReference type="ExpressionAtlas" id="Q9LUW6">
    <property type="expression patterns" value="baseline and differential"/>
</dbReference>
<dbReference type="GO" id="GO:0005737">
    <property type="term" value="C:cytoplasm"/>
    <property type="evidence" value="ECO:0000314"/>
    <property type="project" value="TAIR"/>
</dbReference>
<dbReference type="GO" id="GO:0005829">
    <property type="term" value="C:cytosol"/>
    <property type="evidence" value="ECO:0007005"/>
    <property type="project" value="TAIR"/>
</dbReference>
<dbReference type="GO" id="GO:0005739">
    <property type="term" value="C:mitochondrion"/>
    <property type="evidence" value="ECO:0007669"/>
    <property type="project" value="UniProtKB-SubCell"/>
</dbReference>
<dbReference type="GO" id="GO:0032991">
    <property type="term" value="C:protein-containing complex"/>
    <property type="evidence" value="ECO:0000314"/>
    <property type="project" value="TAIR"/>
</dbReference>
<dbReference type="GO" id="GO:0019034">
    <property type="term" value="C:viral replication complex"/>
    <property type="evidence" value="ECO:0000314"/>
    <property type="project" value="TAIR"/>
</dbReference>
<dbReference type="GO" id="GO:0005524">
    <property type="term" value="F:ATP binding"/>
    <property type="evidence" value="ECO:0007669"/>
    <property type="project" value="UniProtKB-KW"/>
</dbReference>
<dbReference type="GO" id="GO:0016887">
    <property type="term" value="F:ATP hydrolysis activity"/>
    <property type="evidence" value="ECO:0007669"/>
    <property type="project" value="RHEA"/>
</dbReference>
<dbReference type="GO" id="GO:0003677">
    <property type="term" value="F:DNA binding"/>
    <property type="evidence" value="ECO:0000314"/>
    <property type="project" value="TAIR"/>
</dbReference>
<dbReference type="GO" id="GO:0003723">
    <property type="term" value="F:RNA binding"/>
    <property type="evidence" value="ECO:0000314"/>
    <property type="project" value="TAIR"/>
</dbReference>
<dbReference type="GO" id="GO:0003724">
    <property type="term" value="F:RNA helicase activity"/>
    <property type="evidence" value="ECO:0007669"/>
    <property type="project" value="UniProtKB-EC"/>
</dbReference>
<dbReference type="GO" id="GO:0009409">
    <property type="term" value="P:response to cold"/>
    <property type="evidence" value="ECO:0000270"/>
    <property type="project" value="TAIR"/>
</dbReference>
<dbReference type="GO" id="GO:0009651">
    <property type="term" value="P:response to salt stress"/>
    <property type="evidence" value="ECO:0000315"/>
    <property type="project" value="TAIR"/>
</dbReference>
<dbReference type="GO" id="GO:0009414">
    <property type="term" value="P:response to water deprivation"/>
    <property type="evidence" value="ECO:0000315"/>
    <property type="project" value="TAIR"/>
</dbReference>
<dbReference type="GO" id="GO:0039694">
    <property type="term" value="P:viral RNA genome replication"/>
    <property type="evidence" value="ECO:0000315"/>
    <property type="project" value="TAIR"/>
</dbReference>
<dbReference type="CDD" id="cd00268">
    <property type="entry name" value="DEADc"/>
    <property type="match status" value="1"/>
</dbReference>
<dbReference type="CDD" id="cd18787">
    <property type="entry name" value="SF2_C_DEAD"/>
    <property type="match status" value="1"/>
</dbReference>
<dbReference type="FunFam" id="3.40.50.300:FF:001060">
    <property type="entry name" value="ATP-dependent RNA helicase RhlE"/>
    <property type="match status" value="1"/>
</dbReference>
<dbReference type="FunFam" id="3.40.50.300:FF:000911">
    <property type="entry name" value="Nucleolar RNA helicase II"/>
    <property type="match status" value="1"/>
</dbReference>
<dbReference type="Gene3D" id="3.40.50.300">
    <property type="entry name" value="P-loop containing nucleotide triphosphate hydrolases"/>
    <property type="match status" value="2"/>
</dbReference>
<dbReference type="InterPro" id="IPR011545">
    <property type="entry name" value="DEAD/DEAH_box_helicase_dom"/>
</dbReference>
<dbReference type="InterPro" id="IPR050079">
    <property type="entry name" value="DEAD_box_RNA_helicase"/>
</dbReference>
<dbReference type="InterPro" id="IPR014001">
    <property type="entry name" value="Helicase_ATP-bd"/>
</dbReference>
<dbReference type="InterPro" id="IPR001650">
    <property type="entry name" value="Helicase_C-like"/>
</dbReference>
<dbReference type="InterPro" id="IPR027417">
    <property type="entry name" value="P-loop_NTPase"/>
</dbReference>
<dbReference type="InterPro" id="IPR014014">
    <property type="entry name" value="RNA_helicase_DEAD_Q_motif"/>
</dbReference>
<dbReference type="PANTHER" id="PTHR47959">
    <property type="entry name" value="ATP-DEPENDENT RNA HELICASE RHLE-RELATED"/>
    <property type="match status" value="1"/>
</dbReference>
<dbReference type="PANTHER" id="PTHR47959:SF23">
    <property type="entry name" value="HELICASE ATP-BINDING DOMAIN-CONTAINING PROTEIN"/>
    <property type="match status" value="1"/>
</dbReference>
<dbReference type="Pfam" id="PF00270">
    <property type="entry name" value="DEAD"/>
    <property type="match status" value="1"/>
</dbReference>
<dbReference type="Pfam" id="PF00271">
    <property type="entry name" value="Helicase_C"/>
    <property type="match status" value="1"/>
</dbReference>
<dbReference type="SMART" id="SM00487">
    <property type="entry name" value="DEXDc"/>
    <property type="match status" value="1"/>
</dbReference>
<dbReference type="SMART" id="SM00490">
    <property type="entry name" value="HELICc"/>
    <property type="match status" value="1"/>
</dbReference>
<dbReference type="SUPFAM" id="SSF52540">
    <property type="entry name" value="P-loop containing nucleoside triphosphate hydrolases"/>
    <property type="match status" value="1"/>
</dbReference>
<dbReference type="PROSITE" id="PS51192">
    <property type="entry name" value="HELICASE_ATP_BIND_1"/>
    <property type="match status" value="1"/>
</dbReference>
<dbReference type="PROSITE" id="PS51194">
    <property type="entry name" value="HELICASE_CTER"/>
    <property type="match status" value="1"/>
</dbReference>
<dbReference type="PROSITE" id="PS51195">
    <property type="entry name" value="Q_MOTIF"/>
    <property type="match status" value="1"/>
</dbReference>
<comment type="catalytic activity">
    <reaction>
        <text>ATP + H2O = ADP + phosphate + H(+)</text>
        <dbReference type="Rhea" id="RHEA:13065"/>
        <dbReference type="ChEBI" id="CHEBI:15377"/>
        <dbReference type="ChEBI" id="CHEBI:15378"/>
        <dbReference type="ChEBI" id="CHEBI:30616"/>
        <dbReference type="ChEBI" id="CHEBI:43474"/>
        <dbReference type="ChEBI" id="CHEBI:456216"/>
        <dbReference type="EC" id="3.6.4.13"/>
    </reaction>
</comment>
<comment type="subcellular location">
    <subcellularLocation>
        <location evidence="6">Mitochondrion</location>
    </subcellularLocation>
</comment>
<comment type="domain">
    <text>The Q motif is unique to and characteristic of the DEAD box family of RNA helicases and controls ATP binding and hydrolysis.</text>
</comment>
<comment type="similarity">
    <text evidence="5">Belongs to the DEAD box helicase family. DDX21/DDX50 subfamily.</text>
</comment>
<gene>
    <name type="primary">RH9</name>
    <name type="ordered locus">At3g22310</name>
    <name type="ORF">MCB17.17</name>
    <name type="ORF">MCB17.3</name>
</gene>